<accession>B0U1L1</accession>
<gene>
    <name evidence="1" type="primary">valS</name>
    <name type="ordered locus">Xfasm12_0110</name>
</gene>
<protein>
    <recommendedName>
        <fullName evidence="1">Valine--tRNA ligase</fullName>
        <ecNumber evidence="1">6.1.1.9</ecNumber>
    </recommendedName>
    <alternativeName>
        <fullName evidence="1">Valyl-tRNA synthetase</fullName>
        <shortName evidence="1">ValRS</shortName>
    </alternativeName>
</protein>
<sequence>MSQFTSSYDPTSFEARLYAEWEAAGHFKPSGTGQPYTILLPPPNVTGTLHMGHAFQQTLMDALVRYHRMCGDDTLWQVGTDHAGIATEMVVSRNVMLEGRGETRDSLGRDGFINKVWEWKQQSGDTIERQMRRLGVSADWSRSTFTMDPQPSAAVTEAFVRWYEEGLIYRGQRLVNWDPVLKTAISDLEVENVAEEGMLWSIRYPLSDGVTYEHIEHDAAGNEILRETRDSLIVATTRPETLLGDTAVMVHPEDRRYTALIGKTVTLPLTGRQVEVISDTCVDPTFGSGVVKVTPAHDFNDFEVGVRHQLPMIKVLDDAACILSETYAQGWMTPLNNPKGDSRWINIIDIPESEFVIPAHLAGLDRYEARKQILADLDTQGLLVAAIPHTLQVPRGDRTGQVIEPYLTAQWFVRMDRLAARGLELVERGAVRFVPPNWINTYRHWMNNIRDWCISRQLWWGHRIPAWFDEYDGSFYVGRSEAEVRAKHALGPEVTLTQDSNVLETWFSSQLWPFSTLGWPDPTAMAERGFERYLPSSVLVTGFDIIFFWVARMIMATDHFTGNVPFHDVYITGLIRDAQGQKMSKSKGNVLDPLDIIDGITLDDLVAKRTTGLMQPKLAEKIAKATRKEFPDGIAPHGADALRFTIAALATHGRDIKFDLGRAEGYKNFCNKLWNATRFVLMNTADDTAHSPAQHQAGQDGQDAPRTPQPRTDAEQWILSRLAAVTAEAHAQFAAYRFDLLAQALYEFAWNEFCDWFVELAKPALNGNDTQAAASTRHTLLYVLETLLRLLHPLIPFITEELWRQVAPRLGIQATTLMLRPYPQPQQLETAAFANAAADVEWLKIMVSALRRIRSTLNVPPSRRISLLLQGGQEVDRHRITHFAIALHFLLKLEHIDWLSAATAAPPSAIAIVGSLKLLVPLEGLIDVDAERARLDKEIKRVESEIDKSNGKLSNAVFVQNAPTAVVEQERSRLTEWTTQLNGLRERRTTL</sequence>
<evidence type="ECO:0000255" key="1">
    <source>
        <dbReference type="HAMAP-Rule" id="MF_02004"/>
    </source>
</evidence>
<evidence type="ECO:0000256" key="2">
    <source>
        <dbReference type="SAM" id="MobiDB-lite"/>
    </source>
</evidence>
<comment type="function">
    <text evidence="1">Catalyzes the attachment of valine to tRNA(Val). As ValRS can inadvertently accommodate and process structurally similar amino acids such as threonine, to avoid such errors, it has a 'posttransfer' editing activity that hydrolyzes mischarged Thr-tRNA(Val) in a tRNA-dependent manner.</text>
</comment>
<comment type="catalytic activity">
    <reaction evidence="1">
        <text>tRNA(Val) + L-valine + ATP = L-valyl-tRNA(Val) + AMP + diphosphate</text>
        <dbReference type="Rhea" id="RHEA:10704"/>
        <dbReference type="Rhea" id="RHEA-COMP:9672"/>
        <dbReference type="Rhea" id="RHEA-COMP:9708"/>
        <dbReference type="ChEBI" id="CHEBI:30616"/>
        <dbReference type="ChEBI" id="CHEBI:33019"/>
        <dbReference type="ChEBI" id="CHEBI:57762"/>
        <dbReference type="ChEBI" id="CHEBI:78442"/>
        <dbReference type="ChEBI" id="CHEBI:78537"/>
        <dbReference type="ChEBI" id="CHEBI:456215"/>
        <dbReference type="EC" id="6.1.1.9"/>
    </reaction>
</comment>
<comment type="subunit">
    <text evidence="1">Monomer.</text>
</comment>
<comment type="subcellular location">
    <subcellularLocation>
        <location evidence="1">Cytoplasm</location>
    </subcellularLocation>
</comment>
<comment type="domain">
    <text evidence="1">ValRS has two distinct active sites: one for aminoacylation and one for editing. The misactivated threonine is translocated from the active site to the editing site.</text>
</comment>
<comment type="domain">
    <text evidence="1">The C-terminal coiled-coil domain is crucial for aminoacylation activity.</text>
</comment>
<comment type="similarity">
    <text evidence="1">Belongs to the class-I aminoacyl-tRNA synthetase family. ValS type 1 subfamily.</text>
</comment>
<proteinExistence type="inferred from homology"/>
<name>SYV_XYLFM</name>
<feature type="chain" id="PRO_1000189250" description="Valine--tRNA ligase">
    <location>
        <begin position="1"/>
        <end position="991"/>
    </location>
</feature>
<feature type="region of interest" description="Disordered" evidence="2">
    <location>
        <begin position="689"/>
        <end position="711"/>
    </location>
</feature>
<feature type="coiled-coil region" evidence="1">
    <location>
        <begin position="925"/>
        <end position="988"/>
    </location>
</feature>
<feature type="short sequence motif" description="'HIGH' region">
    <location>
        <begin position="43"/>
        <end position="53"/>
    </location>
</feature>
<feature type="short sequence motif" description="'KMSKS' region">
    <location>
        <begin position="582"/>
        <end position="586"/>
    </location>
</feature>
<feature type="compositionally biased region" description="Low complexity" evidence="2">
    <location>
        <begin position="693"/>
        <end position="704"/>
    </location>
</feature>
<feature type="binding site" evidence="1">
    <location>
        <position position="585"/>
    </location>
    <ligand>
        <name>ATP</name>
        <dbReference type="ChEBI" id="CHEBI:30616"/>
    </ligand>
</feature>
<reference key="1">
    <citation type="journal article" date="2010" name="J. Bacteriol.">
        <title>Whole genome sequences of two Xylella fastidiosa strains (M12 and M23) causing almond leaf scorch disease in California.</title>
        <authorList>
            <person name="Chen J."/>
            <person name="Xie G."/>
            <person name="Han S."/>
            <person name="Chertkov O."/>
            <person name="Sims D."/>
            <person name="Civerolo E.L."/>
        </authorList>
    </citation>
    <scope>NUCLEOTIDE SEQUENCE [LARGE SCALE GENOMIC DNA]</scope>
    <source>
        <strain>M12</strain>
    </source>
</reference>
<keyword id="KW-0030">Aminoacyl-tRNA synthetase</keyword>
<keyword id="KW-0067">ATP-binding</keyword>
<keyword id="KW-0175">Coiled coil</keyword>
<keyword id="KW-0963">Cytoplasm</keyword>
<keyword id="KW-0436">Ligase</keyword>
<keyword id="KW-0547">Nucleotide-binding</keyword>
<keyword id="KW-0648">Protein biosynthesis</keyword>
<dbReference type="EC" id="6.1.1.9" evidence="1"/>
<dbReference type="EMBL" id="CP000941">
    <property type="protein sequence ID" value="ACA11149.1"/>
    <property type="molecule type" value="Genomic_DNA"/>
</dbReference>
<dbReference type="RefSeq" id="WP_004085524.1">
    <property type="nucleotide sequence ID" value="NC_010513.1"/>
</dbReference>
<dbReference type="SMR" id="B0U1L1"/>
<dbReference type="KEGG" id="xfm:Xfasm12_0110"/>
<dbReference type="HOGENOM" id="CLU_001493_0_2_6"/>
<dbReference type="GO" id="GO:0005829">
    <property type="term" value="C:cytosol"/>
    <property type="evidence" value="ECO:0007669"/>
    <property type="project" value="TreeGrafter"/>
</dbReference>
<dbReference type="GO" id="GO:0002161">
    <property type="term" value="F:aminoacyl-tRNA deacylase activity"/>
    <property type="evidence" value="ECO:0007669"/>
    <property type="project" value="InterPro"/>
</dbReference>
<dbReference type="GO" id="GO:0005524">
    <property type="term" value="F:ATP binding"/>
    <property type="evidence" value="ECO:0007669"/>
    <property type="project" value="UniProtKB-UniRule"/>
</dbReference>
<dbReference type="GO" id="GO:0004832">
    <property type="term" value="F:valine-tRNA ligase activity"/>
    <property type="evidence" value="ECO:0007669"/>
    <property type="project" value="UniProtKB-UniRule"/>
</dbReference>
<dbReference type="GO" id="GO:0006438">
    <property type="term" value="P:valyl-tRNA aminoacylation"/>
    <property type="evidence" value="ECO:0007669"/>
    <property type="project" value="UniProtKB-UniRule"/>
</dbReference>
<dbReference type="CDD" id="cd07962">
    <property type="entry name" value="Anticodon_Ia_Val"/>
    <property type="match status" value="1"/>
</dbReference>
<dbReference type="CDD" id="cd00817">
    <property type="entry name" value="ValRS_core"/>
    <property type="match status" value="1"/>
</dbReference>
<dbReference type="FunFam" id="1.10.287.380:FF:000001">
    <property type="entry name" value="Valine--tRNA ligase"/>
    <property type="match status" value="1"/>
</dbReference>
<dbReference type="FunFam" id="3.40.50.620:FF:000032">
    <property type="entry name" value="Valine--tRNA ligase"/>
    <property type="match status" value="1"/>
</dbReference>
<dbReference type="FunFam" id="3.40.50.620:FF:000098">
    <property type="entry name" value="Valine--tRNA ligase"/>
    <property type="match status" value="1"/>
</dbReference>
<dbReference type="Gene3D" id="3.40.50.620">
    <property type="entry name" value="HUPs"/>
    <property type="match status" value="2"/>
</dbReference>
<dbReference type="Gene3D" id="1.10.730.10">
    <property type="entry name" value="Isoleucyl-tRNA Synthetase, Domain 1"/>
    <property type="match status" value="1"/>
</dbReference>
<dbReference type="Gene3D" id="1.10.287.380">
    <property type="entry name" value="Valyl-tRNA synthetase, C-terminal domain"/>
    <property type="match status" value="1"/>
</dbReference>
<dbReference type="Gene3D" id="3.90.740.10">
    <property type="entry name" value="Valyl/Leucyl/Isoleucyl-tRNA synthetase, editing domain"/>
    <property type="match status" value="2"/>
</dbReference>
<dbReference type="HAMAP" id="MF_02004">
    <property type="entry name" value="Val_tRNA_synth_type1"/>
    <property type="match status" value="1"/>
</dbReference>
<dbReference type="InterPro" id="IPR001412">
    <property type="entry name" value="aa-tRNA-synth_I_CS"/>
</dbReference>
<dbReference type="InterPro" id="IPR002300">
    <property type="entry name" value="aa-tRNA-synth_Ia"/>
</dbReference>
<dbReference type="InterPro" id="IPR033705">
    <property type="entry name" value="Anticodon_Ia_Val"/>
</dbReference>
<dbReference type="InterPro" id="IPR013155">
    <property type="entry name" value="M/V/L/I-tRNA-synth_anticd-bd"/>
</dbReference>
<dbReference type="InterPro" id="IPR014729">
    <property type="entry name" value="Rossmann-like_a/b/a_fold"/>
</dbReference>
<dbReference type="InterPro" id="IPR010978">
    <property type="entry name" value="tRNA-bd_arm"/>
</dbReference>
<dbReference type="InterPro" id="IPR009080">
    <property type="entry name" value="tRNAsynth_Ia_anticodon-bd"/>
</dbReference>
<dbReference type="InterPro" id="IPR037118">
    <property type="entry name" value="Val-tRNA_synth_C_sf"/>
</dbReference>
<dbReference type="InterPro" id="IPR019499">
    <property type="entry name" value="Val-tRNA_synth_tRNA-bd"/>
</dbReference>
<dbReference type="InterPro" id="IPR009008">
    <property type="entry name" value="Val/Leu/Ile-tRNA-synth_edit"/>
</dbReference>
<dbReference type="InterPro" id="IPR002303">
    <property type="entry name" value="Valyl-tRNA_ligase"/>
</dbReference>
<dbReference type="NCBIfam" id="NF004349">
    <property type="entry name" value="PRK05729.1"/>
    <property type="match status" value="1"/>
</dbReference>
<dbReference type="NCBIfam" id="TIGR00422">
    <property type="entry name" value="valS"/>
    <property type="match status" value="1"/>
</dbReference>
<dbReference type="PANTHER" id="PTHR11946:SF93">
    <property type="entry name" value="VALINE--TRNA LIGASE, CHLOROPLASTIC_MITOCHONDRIAL 2"/>
    <property type="match status" value="1"/>
</dbReference>
<dbReference type="PANTHER" id="PTHR11946">
    <property type="entry name" value="VALYL-TRNA SYNTHETASES"/>
    <property type="match status" value="1"/>
</dbReference>
<dbReference type="Pfam" id="PF08264">
    <property type="entry name" value="Anticodon_1"/>
    <property type="match status" value="1"/>
</dbReference>
<dbReference type="Pfam" id="PF00133">
    <property type="entry name" value="tRNA-synt_1"/>
    <property type="match status" value="1"/>
</dbReference>
<dbReference type="Pfam" id="PF10458">
    <property type="entry name" value="Val_tRNA-synt_C"/>
    <property type="match status" value="1"/>
</dbReference>
<dbReference type="PRINTS" id="PR00986">
    <property type="entry name" value="TRNASYNTHVAL"/>
</dbReference>
<dbReference type="SUPFAM" id="SSF47323">
    <property type="entry name" value="Anticodon-binding domain of a subclass of class I aminoacyl-tRNA synthetases"/>
    <property type="match status" value="1"/>
</dbReference>
<dbReference type="SUPFAM" id="SSF52374">
    <property type="entry name" value="Nucleotidylyl transferase"/>
    <property type="match status" value="1"/>
</dbReference>
<dbReference type="SUPFAM" id="SSF46589">
    <property type="entry name" value="tRNA-binding arm"/>
    <property type="match status" value="1"/>
</dbReference>
<dbReference type="SUPFAM" id="SSF50677">
    <property type="entry name" value="ValRS/IleRS/LeuRS editing domain"/>
    <property type="match status" value="1"/>
</dbReference>
<dbReference type="PROSITE" id="PS00178">
    <property type="entry name" value="AA_TRNA_LIGASE_I"/>
    <property type="match status" value="1"/>
</dbReference>
<organism>
    <name type="scientific">Xylella fastidiosa (strain M12)</name>
    <dbReference type="NCBI Taxonomy" id="405440"/>
    <lineage>
        <taxon>Bacteria</taxon>
        <taxon>Pseudomonadati</taxon>
        <taxon>Pseudomonadota</taxon>
        <taxon>Gammaproteobacteria</taxon>
        <taxon>Lysobacterales</taxon>
        <taxon>Lysobacteraceae</taxon>
        <taxon>Xylella</taxon>
    </lineage>
</organism>